<keyword id="KW-0002">3D-structure</keyword>
<keyword id="KW-0113">Calvin cycle</keyword>
<keyword id="KW-0120">Carbon dioxide fixation</keyword>
<keyword id="KW-0150">Chloroplast</keyword>
<keyword id="KW-0601">Photorespiration</keyword>
<keyword id="KW-0602">Photosynthesis</keyword>
<keyword id="KW-0934">Plastid</keyword>
<keyword id="KW-0809">Transit peptide</keyword>
<name>RBS3_PEA</name>
<evidence type="ECO:0000255" key="1">
    <source>
        <dbReference type="HAMAP-Rule" id="MF_00860"/>
    </source>
</evidence>
<evidence type="ECO:0000269" key="2">
    <source>
    </source>
</evidence>
<evidence type="ECO:0000269" key="3">
    <source>
    </source>
</evidence>
<evidence type="ECO:0000305" key="4">
    <source>
    </source>
</evidence>
<evidence type="ECO:0000305" key="5">
    <source>
    </source>
</evidence>
<evidence type="ECO:0007744" key="6">
    <source>
        <dbReference type="PDB" id="4HHH"/>
    </source>
</evidence>
<evidence type="ECO:0007744" key="7">
    <source>
        <dbReference type="PDB" id="4MKV"/>
    </source>
</evidence>
<evidence type="ECO:0007829" key="8">
    <source>
        <dbReference type="PDB" id="4MKV"/>
    </source>
</evidence>
<reference key="1">
    <citation type="journal article" date="1986" name="EMBO J.">
        <title>Expression dynamics of the pea rbcS multigene family and organ distribution of the transcripts.</title>
        <authorList>
            <person name="Fluhr R."/>
            <person name="Moses P."/>
            <person name="Morelli G."/>
            <person name="Coruzzi G."/>
            <person name="Chua N.-H."/>
        </authorList>
    </citation>
    <scope>NUCLEOTIDE SEQUENCE [GENOMIC DNA]</scope>
    <source>
        <strain>cv. Progress No. 9</strain>
    </source>
</reference>
<reference key="2">
    <citation type="journal article" date="1986" name="Biochem. J.">
        <title>Synthesis of the small subunit of ribulose-bisphosphate carboxylase from genes cloned into plasmids containing the SP6 promoter.</title>
        <authorList>
            <person name="Anderson S."/>
            <person name="Smith S.M."/>
        </authorList>
    </citation>
    <scope>NUCLEOTIDE SEQUENCE [GENOMIC DNA]</scope>
</reference>
<reference key="3">
    <citation type="journal article" date="1988" name="DNA">
        <title>Identification and characterization of cryptic polyadenylation sites in the 3' region of a pea ribulose-1,5-bisphosphate carboxylase small subunit gene.</title>
        <authorList>
            <person name="Hunt A.G."/>
        </authorList>
    </citation>
    <scope>NUCLEOTIDE SEQUENCE [GENOMIC DNA] OF 154-180</scope>
</reference>
<reference evidence="6" key="4">
    <citation type="journal article" date="2013" name="Acta Crystallogr. F">
        <title>Structure of Pisum sativum Rubisco with bound ribulose 1,5-bisphosphate.</title>
        <authorList>
            <person name="Loewen P.C."/>
            <person name="Didychuk A.L."/>
            <person name="Switala J."/>
            <person name="Perez-Luque R."/>
            <person name="Fita I."/>
            <person name="Loewen M.C."/>
        </authorList>
    </citation>
    <scope>X-RAY CRYSTALLOGRAPHY (2.20 ANGSTROMS) OF 58-180 OF INACTIVE HOLOENZYME IN COMPLEX WITH RIBULOSE 1,5-BISPHOSPHATE</scope>
    <scope>FUNCTION</scope>
    <scope>SUBUNIT</scope>
</reference>
<reference evidence="7" key="5">
    <citation type="journal article" date="2015" name="PLoS ONE">
        <title>Identification of Interactions between Abscisic Acid and Ribulose-1,5-Bisphosphate Carboxylase/Oxygenase.</title>
        <authorList>
            <person name="Galka M.M."/>
            <person name="Rajagopalan N."/>
            <person name="Buhrow L.M."/>
            <person name="Nelson K.M."/>
            <person name="Switala J."/>
            <person name="Cutler A.J."/>
            <person name="Palmer D.R."/>
            <person name="Loewen P.C."/>
            <person name="Abrams S.R."/>
            <person name="Loewen M.C."/>
        </authorList>
    </citation>
    <scope>X-RAY CRYSTALLOGRAPHY (2.15 ANGSTROMS) OF 58-180 OF INACTIVE HOLOENZYME IN COMPLEX WITH RIBULOSE 1,5-BISPHOSPHATE</scope>
    <scope>FUNCTION</scope>
    <scope>SUBUNIT</scope>
</reference>
<proteinExistence type="evidence at protein level"/>
<protein>
    <recommendedName>
        <fullName evidence="1">Ribulose bisphosphate carboxylase small subunit, chloroplastic 3</fullName>
        <shortName evidence="1">RuBisCO small subunit 3</shortName>
    </recommendedName>
    <alternativeName>
        <fullName>Ribulose bisphosphate carboxylase small subunit, chloroplastic 3A</fullName>
        <shortName>RuBisCO small subunit 3A</shortName>
    </alternativeName>
</protein>
<dbReference type="EMBL" id="X04333">
    <property type="protein sequence ID" value="CAA27864.1"/>
    <property type="molecule type" value="Genomic_DNA"/>
</dbReference>
<dbReference type="EMBL" id="M21375">
    <property type="protein sequence ID" value="AAA33683.2"/>
    <property type="molecule type" value="Genomic_DNA"/>
</dbReference>
<dbReference type="PIR" id="A27874">
    <property type="entry name" value="RKPMS3"/>
</dbReference>
<dbReference type="PDB" id="4HHH">
    <property type="method" value="X-ray"/>
    <property type="resolution" value="2.20 A"/>
    <property type="chains" value="S/T/U/V=58-180"/>
</dbReference>
<dbReference type="PDB" id="4MKV">
    <property type="method" value="X-ray"/>
    <property type="resolution" value="2.15 A"/>
    <property type="chains" value="S/T/U/V=58-180"/>
</dbReference>
<dbReference type="PDBsum" id="4HHH"/>
<dbReference type="PDBsum" id="4MKV"/>
<dbReference type="SMR" id="P07689"/>
<dbReference type="OrthoDB" id="561at2759"/>
<dbReference type="BRENDA" id="4.1.1.39">
    <property type="organism ID" value="4872"/>
</dbReference>
<dbReference type="EvolutionaryTrace" id="P07689"/>
<dbReference type="GO" id="GO:0009507">
    <property type="term" value="C:chloroplast"/>
    <property type="evidence" value="ECO:0007669"/>
    <property type="project" value="UniProtKB-SubCell"/>
</dbReference>
<dbReference type="GO" id="GO:0016984">
    <property type="term" value="F:ribulose-bisphosphate carboxylase activity"/>
    <property type="evidence" value="ECO:0007669"/>
    <property type="project" value="UniProtKB-UniRule"/>
</dbReference>
<dbReference type="GO" id="GO:0009853">
    <property type="term" value="P:photorespiration"/>
    <property type="evidence" value="ECO:0007669"/>
    <property type="project" value="UniProtKB-KW"/>
</dbReference>
<dbReference type="GO" id="GO:0019253">
    <property type="term" value="P:reductive pentose-phosphate cycle"/>
    <property type="evidence" value="ECO:0007669"/>
    <property type="project" value="UniProtKB-UniRule"/>
</dbReference>
<dbReference type="CDD" id="cd03527">
    <property type="entry name" value="RuBisCO_small"/>
    <property type="match status" value="1"/>
</dbReference>
<dbReference type="FunFam" id="3.30.190.10:FF:000001">
    <property type="entry name" value="Ribulose bisphosphate carboxylase small chain, chloroplastic"/>
    <property type="match status" value="1"/>
</dbReference>
<dbReference type="Gene3D" id="3.30.190.10">
    <property type="entry name" value="Ribulose bisphosphate carboxylase, small subunit"/>
    <property type="match status" value="1"/>
</dbReference>
<dbReference type="HAMAP" id="MF_00859">
    <property type="entry name" value="RuBisCO_S_bact"/>
    <property type="match status" value="1"/>
</dbReference>
<dbReference type="InterPro" id="IPR024681">
    <property type="entry name" value="RuBisCO_ssu"/>
</dbReference>
<dbReference type="InterPro" id="IPR000894">
    <property type="entry name" value="RuBisCO_ssu_dom"/>
</dbReference>
<dbReference type="InterPro" id="IPR024680">
    <property type="entry name" value="RuBisCO_ssu_N"/>
</dbReference>
<dbReference type="InterPro" id="IPR036385">
    <property type="entry name" value="RuBisCO_ssu_sf"/>
</dbReference>
<dbReference type="PANTHER" id="PTHR31262">
    <property type="entry name" value="RIBULOSE BISPHOSPHATE CARBOXYLASE SMALL CHAIN 1, CHLOROPLASTIC"/>
    <property type="match status" value="1"/>
</dbReference>
<dbReference type="PANTHER" id="PTHR31262:SF19">
    <property type="entry name" value="RIBULOSE BISPHOSPHATE CARBOXYLASE SMALL SUBUNIT, CHLOROPLASTIC 2"/>
    <property type="match status" value="1"/>
</dbReference>
<dbReference type="Pfam" id="PF12338">
    <property type="entry name" value="RbcS"/>
    <property type="match status" value="1"/>
</dbReference>
<dbReference type="Pfam" id="PF00101">
    <property type="entry name" value="RuBisCO_small"/>
    <property type="match status" value="1"/>
</dbReference>
<dbReference type="PRINTS" id="PR00152">
    <property type="entry name" value="RUBISCOSMALL"/>
</dbReference>
<dbReference type="SMART" id="SM00961">
    <property type="entry name" value="RuBisCO_small"/>
    <property type="match status" value="1"/>
</dbReference>
<dbReference type="SUPFAM" id="SSF55239">
    <property type="entry name" value="RuBisCO, small subunit"/>
    <property type="match status" value="1"/>
</dbReference>
<gene>
    <name type="primary">RBCS.3A</name>
</gene>
<accession>P07689</accession>
<accession>P12467</accession>
<comment type="function">
    <text evidence="3 4 5">RuBisCO catalyzes two reactions: the carboxylation of D-ribulose 1,5-bisphosphate, the primary event in carbon dioxide fixation, as well as the oxidative fragmentation of the pentose substrate. Both reactions occur simultaneously and in competition at the same active site. Although the small subunit is not catalytic it is essential for maximal activity (Probable). Binds to abscisic acid (ABA); only half of the possible binding sites are occupied in the crystal; and there are indications this is a low affinity site (PubMed:26197050).</text>
</comment>
<comment type="subunit">
    <text evidence="1 2 3">Heterohexadecamer of 8 large and 8 small subunits.</text>
</comment>
<comment type="subcellular location">
    <subcellularLocation>
        <location evidence="1">Plastid</location>
        <location evidence="1">Chloroplast</location>
    </subcellularLocation>
</comment>
<comment type="miscellaneous">
    <text evidence="1 2 3">The basic functional RuBisCO is composed of a large chain homodimer in a 'head-to-tail' conformation. In form I RuBisCO this homodimer is arranged in a barrel-like tetramer with the small subunits forming a tetrameric 'cap' on each end of the 'barrel'.</text>
</comment>
<comment type="similarity">
    <text evidence="1">Belongs to the RuBisCO small chain family.</text>
</comment>
<sequence>MASMISSSAVTTVSRASTVQSAAVAPFGGLKSMTGFPVKKVNTDITSITSNGGRVKCMQVWPPIGKKKFETLSYLPPLTRDQLLKEVEYLLRKGWVPCLEFELEKGFVYREHNKSPGYYDGRYWTMWKLPMFGTTDASQVLKELDEVVAAYPQAFVRIIGFDNVRQVQCISFIAHTPESY</sequence>
<feature type="transit peptide" description="Chloroplast" evidence="1">
    <location>
        <begin position="1"/>
        <end position="56"/>
    </location>
</feature>
<feature type="chain" id="PRO_0000031542" description="Ribulose bisphosphate carboxylase small subunit, chloroplastic 3" evidence="1">
    <location>
        <begin position="57"/>
        <end position="180"/>
    </location>
</feature>
<feature type="strand" evidence="8">
    <location>
        <begin position="63"/>
        <end position="65"/>
    </location>
</feature>
<feature type="turn" evidence="8">
    <location>
        <begin position="71"/>
        <end position="74"/>
    </location>
</feature>
<feature type="helix" evidence="8">
    <location>
        <begin position="80"/>
        <end position="92"/>
    </location>
</feature>
<feature type="strand" evidence="8">
    <location>
        <begin position="96"/>
        <end position="104"/>
    </location>
</feature>
<feature type="strand" evidence="8">
    <location>
        <begin position="125"/>
        <end position="128"/>
    </location>
</feature>
<feature type="helix" evidence="8">
    <location>
        <begin position="137"/>
        <end position="150"/>
    </location>
</feature>
<feature type="strand" evidence="8">
    <location>
        <begin position="155"/>
        <end position="162"/>
    </location>
</feature>
<feature type="turn" evidence="8">
    <location>
        <begin position="163"/>
        <end position="166"/>
    </location>
</feature>
<feature type="strand" evidence="8">
    <location>
        <begin position="167"/>
        <end position="175"/>
    </location>
</feature>
<organism>
    <name type="scientific">Pisum sativum</name>
    <name type="common">Garden pea</name>
    <name type="synonym">Lathyrus oleraceus</name>
    <dbReference type="NCBI Taxonomy" id="3888"/>
    <lineage>
        <taxon>Eukaryota</taxon>
        <taxon>Viridiplantae</taxon>
        <taxon>Streptophyta</taxon>
        <taxon>Embryophyta</taxon>
        <taxon>Tracheophyta</taxon>
        <taxon>Spermatophyta</taxon>
        <taxon>Magnoliopsida</taxon>
        <taxon>eudicotyledons</taxon>
        <taxon>Gunneridae</taxon>
        <taxon>Pentapetalae</taxon>
        <taxon>rosids</taxon>
        <taxon>fabids</taxon>
        <taxon>Fabales</taxon>
        <taxon>Fabaceae</taxon>
        <taxon>Papilionoideae</taxon>
        <taxon>50 kb inversion clade</taxon>
        <taxon>NPAAA clade</taxon>
        <taxon>Hologalegina</taxon>
        <taxon>IRL clade</taxon>
        <taxon>Fabeae</taxon>
        <taxon>Pisum</taxon>
    </lineage>
</organism>